<keyword id="KW-0238">DNA-binding</keyword>
<keyword id="KW-1185">Reference proteome</keyword>
<evidence type="ECO:0000255" key="1">
    <source>
        <dbReference type="HAMAP-Rule" id="MF_00984"/>
    </source>
</evidence>
<evidence type="ECO:0000256" key="2">
    <source>
        <dbReference type="SAM" id="MobiDB-lite"/>
    </source>
</evidence>
<comment type="subunit">
    <text evidence="1">Homotetramer.</text>
</comment>
<sequence length="162" mass="17805">MARGLNKVMLIGHLGNDPERRETASGQSVVNFTLATSEGFKDSSGNLQERTEWHRIVAWGKLADICSQYLKKGRQVYIEGRLQTRSWDDNKTGDKKYATEIVCTDMQMLGAKDSGGGTSDASYSQNRPSYSRPSRPEPSSGNYGASPSSGGAQEFEKDDLPF</sequence>
<dbReference type="EMBL" id="AE006470">
    <property type="protein sequence ID" value="AAM73166.1"/>
    <property type="molecule type" value="Genomic_DNA"/>
</dbReference>
<dbReference type="RefSeq" id="NP_662824.1">
    <property type="nucleotide sequence ID" value="NC_002932.3"/>
</dbReference>
<dbReference type="RefSeq" id="WP_010933604.1">
    <property type="nucleotide sequence ID" value="NC_002932.3"/>
</dbReference>
<dbReference type="SMR" id="Q8KB47"/>
<dbReference type="STRING" id="194439.CT1947"/>
<dbReference type="EnsemblBacteria" id="AAM73166">
    <property type="protein sequence ID" value="AAM73166"/>
    <property type="gene ID" value="CT1947"/>
</dbReference>
<dbReference type="KEGG" id="cte:CT1947"/>
<dbReference type="PATRIC" id="fig|194439.7.peg.1764"/>
<dbReference type="eggNOG" id="COG0629">
    <property type="taxonomic scope" value="Bacteria"/>
</dbReference>
<dbReference type="HOGENOM" id="CLU_078758_0_2_10"/>
<dbReference type="OrthoDB" id="9809878at2"/>
<dbReference type="Proteomes" id="UP000001007">
    <property type="component" value="Chromosome"/>
</dbReference>
<dbReference type="GO" id="GO:0009295">
    <property type="term" value="C:nucleoid"/>
    <property type="evidence" value="ECO:0007669"/>
    <property type="project" value="TreeGrafter"/>
</dbReference>
<dbReference type="GO" id="GO:0003697">
    <property type="term" value="F:single-stranded DNA binding"/>
    <property type="evidence" value="ECO:0007669"/>
    <property type="project" value="UniProtKB-UniRule"/>
</dbReference>
<dbReference type="GO" id="GO:0006260">
    <property type="term" value="P:DNA replication"/>
    <property type="evidence" value="ECO:0007669"/>
    <property type="project" value="InterPro"/>
</dbReference>
<dbReference type="CDD" id="cd04496">
    <property type="entry name" value="SSB_OBF"/>
    <property type="match status" value="1"/>
</dbReference>
<dbReference type="Gene3D" id="2.40.50.140">
    <property type="entry name" value="Nucleic acid-binding proteins"/>
    <property type="match status" value="1"/>
</dbReference>
<dbReference type="HAMAP" id="MF_00984">
    <property type="entry name" value="SSB"/>
    <property type="match status" value="1"/>
</dbReference>
<dbReference type="InterPro" id="IPR012340">
    <property type="entry name" value="NA-bd_OB-fold"/>
</dbReference>
<dbReference type="InterPro" id="IPR000424">
    <property type="entry name" value="Primosome_PriB/ssb"/>
</dbReference>
<dbReference type="InterPro" id="IPR011344">
    <property type="entry name" value="ssDNA-bd"/>
</dbReference>
<dbReference type="NCBIfam" id="TIGR00621">
    <property type="entry name" value="ssb"/>
    <property type="match status" value="1"/>
</dbReference>
<dbReference type="PANTHER" id="PTHR10302">
    <property type="entry name" value="SINGLE-STRANDED DNA-BINDING PROTEIN"/>
    <property type="match status" value="1"/>
</dbReference>
<dbReference type="PANTHER" id="PTHR10302:SF27">
    <property type="entry name" value="SINGLE-STRANDED DNA-BINDING PROTEIN"/>
    <property type="match status" value="1"/>
</dbReference>
<dbReference type="Pfam" id="PF00436">
    <property type="entry name" value="SSB"/>
    <property type="match status" value="1"/>
</dbReference>
<dbReference type="PIRSF" id="PIRSF002070">
    <property type="entry name" value="SSB"/>
    <property type="match status" value="1"/>
</dbReference>
<dbReference type="SUPFAM" id="SSF50249">
    <property type="entry name" value="Nucleic acid-binding proteins"/>
    <property type="match status" value="1"/>
</dbReference>
<dbReference type="PROSITE" id="PS50935">
    <property type="entry name" value="SSB"/>
    <property type="match status" value="1"/>
</dbReference>
<proteinExistence type="inferred from homology"/>
<accession>Q8KB47</accession>
<reference key="1">
    <citation type="journal article" date="2002" name="Proc. Natl. Acad. Sci. U.S.A.">
        <title>The complete genome sequence of Chlorobium tepidum TLS, a photosynthetic, anaerobic, green-sulfur bacterium.</title>
        <authorList>
            <person name="Eisen J.A."/>
            <person name="Nelson K.E."/>
            <person name="Paulsen I.T."/>
            <person name="Heidelberg J.F."/>
            <person name="Wu M."/>
            <person name="Dodson R.J."/>
            <person name="DeBoy R.T."/>
            <person name="Gwinn M.L."/>
            <person name="Nelson W.C."/>
            <person name="Haft D.H."/>
            <person name="Hickey E.K."/>
            <person name="Peterson J.D."/>
            <person name="Durkin A.S."/>
            <person name="Kolonay J.F."/>
            <person name="Yang F."/>
            <person name="Holt I.E."/>
            <person name="Umayam L.A."/>
            <person name="Mason T.M."/>
            <person name="Brenner M."/>
            <person name="Shea T.P."/>
            <person name="Parksey D.S."/>
            <person name="Nierman W.C."/>
            <person name="Feldblyum T.V."/>
            <person name="Hansen C.L."/>
            <person name="Craven M.B."/>
            <person name="Radune D."/>
            <person name="Vamathevan J.J."/>
            <person name="Khouri H.M."/>
            <person name="White O."/>
            <person name="Gruber T.M."/>
            <person name="Ketchum K.A."/>
            <person name="Venter J.C."/>
            <person name="Tettelin H."/>
            <person name="Bryant D.A."/>
            <person name="Fraser C.M."/>
        </authorList>
    </citation>
    <scope>NUCLEOTIDE SEQUENCE [LARGE SCALE GENOMIC DNA]</scope>
    <source>
        <strain>ATCC 49652 / DSM 12025 / NBRC 103806 / TLS</strain>
    </source>
</reference>
<feature type="chain" id="PRO_0000096025" description="Single-stranded DNA-binding protein 1">
    <location>
        <begin position="1"/>
        <end position="162"/>
    </location>
</feature>
<feature type="domain" description="SSB" evidence="1">
    <location>
        <begin position="5"/>
        <end position="110"/>
    </location>
</feature>
<feature type="region of interest" description="Disordered" evidence="2">
    <location>
        <begin position="110"/>
        <end position="162"/>
    </location>
</feature>
<feature type="compositionally biased region" description="Low complexity" evidence="2">
    <location>
        <begin position="122"/>
        <end position="140"/>
    </location>
</feature>
<feature type="compositionally biased region" description="Polar residues" evidence="2">
    <location>
        <begin position="141"/>
        <end position="151"/>
    </location>
</feature>
<gene>
    <name type="primary">ssb1</name>
    <name type="ordered locus">CT1947</name>
</gene>
<organism>
    <name type="scientific">Chlorobaculum tepidum (strain ATCC 49652 / DSM 12025 / NBRC 103806 / TLS)</name>
    <name type="common">Chlorobium tepidum</name>
    <dbReference type="NCBI Taxonomy" id="194439"/>
    <lineage>
        <taxon>Bacteria</taxon>
        <taxon>Pseudomonadati</taxon>
        <taxon>Chlorobiota</taxon>
        <taxon>Chlorobiia</taxon>
        <taxon>Chlorobiales</taxon>
        <taxon>Chlorobiaceae</taxon>
        <taxon>Chlorobaculum</taxon>
    </lineage>
</organism>
<protein>
    <recommendedName>
        <fullName evidence="1">Single-stranded DNA-binding protein 1</fullName>
        <shortName evidence="1">SSB 1</shortName>
    </recommendedName>
</protein>
<name>SSB1_CHLTE</name>